<organism>
    <name type="scientific">Ehrlichia ruminantium (strain Welgevonden)</name>
    <dbReference type="NCBI Taxonomy" id="254945"/>
    <lineage>
        <taxon>Bacteria</taxon>
        <taxon>Pseudomonadati</taxon>
        <taxon>Pseudomonadota</taxon>
        <taxon>Alphaproteobacteria</taxon>
        <taxon>Rickettsiales</taxon>
        <taxon>Anaplasmataceae</taxon>
        <taxon>Ehrlichia</taxon>
    </lineage>
</organism>
<name>DAPE_EHRRW</name>
<sequence>MVIDPVTLSQELISFPSITPTDNGAISFLSDILSQYGFTCHILDFGDDTVTVRNLYAYRGTEEGPNLCFAGHTDVVKTGDLTKWKFDPFSGHIEDDILYGRGAVDMKSAICAFIAAVSRINFNEVPGSISFLISGDEEGDHFQYGTPSVLKWLNENNHKIDYCIIGEPTSKSFLGDTIKVGRRGSVHFKIICNGIQGHVAYPHFAENPIDNMVSILYKICNTTFDTGNEYFQPSNCEIVSVDTGNTSKNVIPDTIVAHINIRYNNIHTAESLFDIINNICAQVTPKYQLLQSVSGEPFFNQPNQYSDMLSSAIKKVTGQDAIASTSGGVSDSRFIKNVCPVIEFGLKNETAHKIDEHVPVKEIYQLADIYTEFIKQFFNLSTT</sequence>
<evidence type="ECO:0000255" key="1">
    <source>
        <dbReference type="HAMAP-Rule" id="MF_01690"/>
    </source>
</evidence>
<protein>
    <recommendedName>
        <fullName evidence="1">Succinyl-diaminopimelate desuccinylase</fullName>
        <shortName evidence="1">SDAP desuccinylase</shortName>
        <ecNumber evidence="1">3.5.1.18</ecNumber>
    </recommendedName>
    <alternativeName>
        <fullName evidence="1">N-succinyl-LL-2,6-diaminoheptanedioate amidohydrolase</fullName>
    </alternativeName>
</protein>
<keyword id="KW-0028">Amino-acid biosynthesis</keyword>
<keyword id="KW-0170">Cobalt</keyword>
<keyword id="KW-0220">Diaminopimelate biosynthesis</keyword>
<keyword id="KW-0378">Hydrolase</keyword>
<keyword id="KW-0457">Lysine biosynthesis</keyword>
<keyword id="KW-0479">Metal-binding</keyword>
<keyword id="KW-0862">Zinc</keyword>
<comment type="function">
    <text evidence="1">Catalyzes the hydrolysis of N-succinyl-L,L-diaminopimelic acid (SDAP), forming succinate and LL-2,6-diaminopimelate (DAP), an intermediate involved in the bacterial biosynthesis of lysine and meso-diaminopimelic acid, an essential component of bacterial cell walls.</text>
</comment>
<comment type="catalytic activity">
    <reaction evidence="1">
        <text>N-succinyl-(2S,6S)-2,6-diaminopimelate + H2O = (2S,6S)-2,6-diaminopimelate + succinate</text>
        <dbReference type="Rhea" id="RHEA:22608"/>
        <dbReference type="ChEBI" id="CHEBI:15377"/>
        <dbReference type="ChEBI" id="CHEBI:30031"/>
        <dbReference type="ChEBI" id="CHEBI:57609"/>
        <dbReference type="ChEBI" id="CHEBI:58087"/>
        <dbReference type="EC" id="3.5.1.18"/>
    </reaction>
</comment>
<comment type="cofactor">
    <cofactor evidence="1">
        <name>Zn(2+)</name>
        <dbReference type="ChEBI" id="CHEBI:29105"/>
    </cofactor>
    <cofactor evidence="1">
        <name>Co(2+)</name>
        <dbReference type="ChEBI" id="CHEBI:48828"/>
    </cofactor>
    <text evidence="1">Binds 2 Zn(2+) or Co(2+) ions per subunit.</text>
</comment>
<comment type="pathway">
    <text evidence="1">Amino-acid biosynthesis; L-lysine biosynthesis via DAP pathway; LL-2,6-diaminopimelate from (S)-tetrahydrodipicolinate (succinylase route): step 3/3.</text>
</comment>
<comment type="subunit">
    <text evidence="1">Homodimer.</text>
</comment>
<comment type="similarity">
    <text evidence="1">Belongs to the peptidase M20A family. DapE subfamily.</text>
</comment>
<proteinExistence type="inferred from homology"/>
<accession>Q5HC82</accession>
<accession>Q5FCQ9</accession>
<dbReference type="EC" id="3.5.1.18" evidence="1"/>
<dbReference type="EMBL" id="CR767821">
    <property type="protein sequence ID" value="CAH57809.1"/>
    <property type="molecule type" value="Genomic_DNA"/>
</dbReference>
<dbReference type="EMBL" id="CR925678">
    <property type="protein sequence ID" value="CAI26585.1"/>
    <property type="molecule type" value="Genomic_DNA"/>
</dbReference>
<dbReference type="RefSeq" id="WP_011154778.1">
    <property type="nucleotide sequence ID" value="NC_005295.2"/>
</dbReference>
<dbReference type="SMR" id="Q5HC82"/>
<dbReference type="GeneID" id="33057817"/>
<dbReference type="KEGG" id="eru:Erum0940"/>
<dbReference type="KEGG" id="erw:ERWE_CDS_00910"/>
<dbReference type="eggNOG" id="COG0624">
    <property type="taxonomic scope" value="Bacteria"/>
</dbReference>
<dbReference type="HOGENOM" id="CLU_021802_4_0_5"/>
<dbReference type="UniPathway" id="UPA00034">
    <property type="reaction ID" value="UER00021"/>
</dbReference>
<dbReference type="Proteomes" id="UP000001021">
    <property type="component" value="Chromosome"/>
</dbReference>
<dbReference type="GO" id="GO:0008777">
    <property type="term" value="F:acetylornithine deacetylase activity"/>
    <property type="evidence" value="ECO:0007669"/>
    <property type="project" value="TreeGrafter"/>
</dbReference>
<dbReference type="GO" id="GO:0050897">
    <property type="term" value="F:cobalt ion binding"/>
    <property type="evidence" value="ECO:0007669"/>
    <property type="project" value="UniProtKB-UniRule"/>
</dbReference>
<dbReference type="GO" id="GO:0009014">
    <property type="term" value="F:succinyl-diaminopimelate desuccinylase activity"/>
    <property type="evidence" value="ECO:0007669"/>
    <property type="project" value="UniProtKB-UniRule"/>
</dbReference>
<dbReference type="GO" id="GO:0008270">
    <property type="term" value="F:zinc ion binding"/>
    <property type="evidence" value="ECO:0007669"/>
    <property type="project" value="UniProtKB-UniRule"/>
</dbReference>
<dbReference type="GO" id="GO:0019877">
    <property type="term" value="P:diaminopimelate biosynthetic process"/>
    <property type="evidence" value="ECO:0007669"/>
    <property type="project" value="UniProtKB-UniRule"/>
</dbReference>
<dbReference type="GO" id="GO:0006526">
    <property type="term" value="P:L-arginine biosynthetic process"/>
    <property type="evidence" value="ECO:0007669"/>
    <property type="project" value="TreeGrafter"/>
</dbReference>
<dbReference type="GO" id="GO:0009089">
    <property type="term" value="P:lysine biosynthetic process via diaminopimelate"/>
    <property type="evidence" value="ECO:0007669"/>
    <property type="project" value="UniProtKB-UniRule"/>
</dbReference>
<dbReference type="CDD" id="cd03891">
    <property type="entry name" value="M20_DapE_proteobac"/>
    <property type="match status" value="1"/>
</dbReference>
<dbReference type="Gene3D" id="3.30.70.360">
    <property type="match status" value="1"/>
</dbReference>
<dbReference type="Gene3D" id="3.40.630.10">
    <property type="entry name" value="Zn peptidases"/>
    <property type="match status" value="2"/>
</dbReference>
<dbReference type="HAMAP" id="MF_01690">
    <property type="entry name" value="DapE"/>
    <property type="match status" value="1"/>
</dbReference>
<dbReference type="InterPro" id="IPR001261">
    <property type="entry name" value="ArgE/DapE_CS"/>
</dbReference>
<dbReference type="InterPro" id="IPR036264">
    <property type="entry name" value="Bact_exopeptidase_dim_dom"/>
</dbReference>
<dbReference type="InterPro" id="IPR005941">
    <property type="entry name" value="DapE_proteobac"/>
</dbReference>
<dbReference type="InterPro" id="IPR002933">
    <property type="entry name" value="Peptidase_M20"/>
</dbReference>
<dbReference type="InterPro" id="IPR011650">
    <property type="entry name" value="Peptidase_M20_dimer"/>
</dbReference>
<dbReference type="InterPro" id="IPR050072">
    <property type="entry name" value="Peptidase_M20A"/>
</dbReference>
<dbReference type="NCBIfam" id="TIGR01246">
    <property type="entry name" value="dapE_proteo"/>
    <property type="match status" value="1"/>
</dbReference>
<dbReference type="NCBIfam" id="NF009557">
    <property type="entry name" value="PRK13009.1"/>
    <property type="match status" value="1"/>
</dbReference>
<dbReference type="PANTHER" id="PTHR43808">
    <property type="entry name" value="ACETYLORNITHINE DEACETYLASE"/>
    <property type="match status" value="1"/>
</dbReference>
<dbReference type="PANTHER" id="PTHR43808:SF31">
    <property type="entry name" value="N-ACETYL-L-CITRULLINE DEACETYLASE"/>
    <property type="match status" value="1"/>
</dbReference>
<dbReference type="Pfam" id="PF07687">
    <property type="entry name" value="M20_dimer"/>
    <property type="match status" value="1"/>
</dbReference>
<dbReference type="Pfam" id="PF01546">
    <property type="entry name" value="Peptidase_M20"/>
    <property type="match status" value="1"/>
</dbReference>
<dbReference type="SUPFAM" id="SSF55031">
    <property type="entry name" value="Bacterial exopeptidase dimerisation domain"/>
    <property type="match status" value="1"/>
</dbReference>
<dbReference type="SUPFAM" id="SSF53187">
    <property type="entry name" value="Zn-dependent exopeptidases"/>
    <property type="match status" value="1"/>
</dbReference>
<dbReference type="PROSITE" id="PS00759">
    <property type="entry name" value="ARGE_DAPE_CPG2_2"/>
    <property type="match status" value="1"/>
</dbReference>
<reference key="1">
    <citation type="journal article" date="2005" name="Proc. Natl. Acad. Sci. U.S.A.">
        <title>The genome of the heartwater agent Ehrlichia ruminantium contains multiple tandem repeats of actively variable copy number.</title>
        <authorList>
            <person name="Collins N.E."/>
            <person name="Liebenberg J."/>
            <person name="de Villiers E.P."/>
            <person name="Brayton K.A."/>
            <person name="Louw E."/>
            <person name="Pretorius A."/>
            <person name="Faber F.E."/>
            <person name="van Heerden H."/>
            <person name="Josemans A."/>
            <person name="van Kleef M."/>
            <person name="Steyn H.C."/>
            <person name="van Strijp M.F."/>
            <person name="Zweygarth E."/>
            <person name="Jongejan F."/>
            <person name="Maillard J.C."/>
            <person name="Berthier D."/>
            <person name="Botha M."/>
            <person name="Joubert F."/>
            <person name="Corton C.H."/>
            <person name="Thomson N.R."/>
            <person name="Allsopp M.T."/>
            <person name="Allsopp B.A."/>
        </authorList>
    </citation>
    <scope>NUCLEOTIDE SEQUENCE [LARGE SCALE GENOMIC DNA]</scope>
    <source>
        <strain>Welgevonden</strain>
    </source>
</reference>
<reference key="2">
    <citation type="journal article" date="2006" name="J. Bacteriol.">
        <title>Comparative genomic analysis of three strains of Ehrlichia ruminantium reveals an active process of genome size plasticity.</title>
        <authorList>
            <person name="Frutos R."/>
            <person name="Viari A."/>
            <person name="Ferraz C."/>
            <person name="Morgat A."/>
            <person name="Eychenie S."/>
            <person name="Kandassamy Y."/>
            <person name="Chantal I."/>
            <person name="Bensaid A."/>
            <person name="Coissac E."/>
            <person name="Vachiery N."/>
            <person name="Demaille J."/>
            <person name="Martinez D."/>
        </authorList>
    </citation>
    <scope>NUCLEOTIDE SEQUENCE [LARGE SCALE GENOMIC DNA]</scope>
    <source>
        <strain>Welgevonden</strain>
    </source>
</reference>
<feature type="chain" id="PRO_0000375547" description="Succinyl-diaminopimelate desuccinylase">
    <location>
        <begin position="1"/>
        <end position="383"/>
    </location>
</feature>
<feature type="active site" evidence="1">
    <location>
        <position position="74"/>
    </location>
</feature>
<feature type="active site" description="Proton acceptor" evidence="1">
    <location>
        <position position="137"/>
    </location>
</feature>
<feature type="binding site" evidence="1">
    <location>
        <position position="72"/>
    </location>
    <ligand>
        <name>Zn(2+)</name>
        <dbReference type="ChEBI" id="CHEBI:29105"/>
        <label>1</label>
    </ligand>
</feature>
<feature type="binding site" evidence="1">
    <location>
        <position position="105"/>
    </location>
    <ligand>
        <name>Zn(2+)</name>
        <dbReference type="ChEBI" id="CHEBI:29105"/>
        <label>1</label>
    </ligand>
</feature>
<feature type="binding site" evidence="1">
    <location>
        <position position="105"/>
    </location>
    <ligand>
        <name>Zn(2+)</name>
        <dbReference type="ChEBI" id="CHEBI:29105"/>
        <label>2</label>
    </ligand>
</feature>
<feature type="binding site" evidence="1">
    <location>
        <position position="138"/>
    </location>
    <ligand>
        <name>Zn(2+)</name>
        <dbReference type="ChEBI" id="CHEBI:29105"/>
        <label>2</label>
    </ligand>
</feature>
<feature type="binding site" evidence="1">
    <location>
        <position position="167"/>
    </location>
    <ligand>
        <name>Zn(2+)</name>
        <dbReference type="ChEBI" id="CHEBI:29105"/>
        <label>1</label>
    </ligand>
</feature>
<feature type="binding site" evidence="1">
    <location>
        <position position="352"/>
    </location>
    <ligand>
        <name>Zn(2+)</name>
        <dbReference type="ChEBI" id="CHEBI:29105"/>
        <label>2</label>
    </ligand>
</feature>
<gene>
    <name evidence="1" type="primary">dapE</name>
    <name type="ordered locus">Erum0940</name>
    <name type="ordered locus">ERWE_CDS_00910</name>
</gene>